<accession>Q5LIK4</accession>
<evidence type="ECO:0000255" key="1">
    <source>
        <dbReference type="HAMAP-Rule" id="MF_00500"/>
    </source>
</evidence>
<evidence type="ECO:0000305" key="2"/>
<protein>
    <recommendedName>
        <fullName evidence="1">Small ribosomal subunit protein bS20</fullName>
    </recommendedName>
    <alternativeName>
        <fullName evidence="2">30S ribosomal protein S20</fullName>
    </alternativeName>
</protein>
<gene>
    <name evidence="1" type="primary">rpsT</name>
    <name type="ordered locus">BF0247</name>
</gene>
<name>RS20_BACFN</name>
<proteinExistence type="inferred from homology"/>
<organism>
    <name type="scientific">Bacteroides fragilis (strain ATCC 25285 / DSM 2151 / CCUG 4856 / JCM 11019 / LMG 10263 / NCTC 9343 / Onslow / VPI 2553 / EN-2)</name>
    <dbReference type="NCBI Taxonomy" id="272559"/>
    <lineage>
        <taxon>Bacteria</taxon>
        <taxon>Pseudomonadati</taxon>
        <taxon>Bacteroidota</taxon>
        <taxon>Bacteroidia</taxon>
        <taxon>Bacteroidales</taxon>
        <taxon>Bacteroidaceae</taxon>
        <taxon>Bacteroides</taxon>
    </lineage>
</organism>
<reference key="1">
    <citation type="journal article" date="2005" name="Science">
        <title>Extensive DNA inversions in the B. fragilis genome control variable gene expression.</title>
        <authorList>
            <person name="Cerdeno-Tarraga A.-M."/>
            <person name="Patrick S."/>
            <person name="Crossman L.C."/>
            <person name="Blakely G."/>
            <person name="Abratt V."/>
            <person name="Lennard N."/>
            <person name="Poxton I."/>
            <person name="Duerden B."/>
            <person name="Harris B."/>
            <person name="Quail M.A."/>
            <person name="Barron A."/>
            <person name="Clark L."/>
            <person name="Corton C."/>
            <person name="Doggett J."/>
            <person name="Holden M.T.G."/>
            <person name="Larke N."/>
            <person name="Line A."/>
            <person name="Lord A."/>
            <person name="Norbertczak H."/>
            <person name="Ormond D."/>
            <person name="Price C."/>
            <person name="Rabbinowitsch E."/>
            <person name="Woodward J."/>
            <person name="Barrell B.G."/>
            <person name="Parkhill J."/>
        </authorList>
    </citation>
    <scope>NUCLEOTIDE SEQUENCE [LARGE SCALE GENOMIC DNA]</scope>
    <source>
        <strain>ATCC 25285 / DSM 2151 / CCUG 4856 / JCM 11019 / LMG 10263 / NCTC 9343 / Onslow / VPI 2553 / EN-2</strain>
    </source>
</reference>
<dbReference type="EMBL" id="CR626927">
    <property type="protein sequence ID" value="CAH06022.1"/>
    <property type="molecule type" value="Genomic_DNA"/>
</dbReference>
<dbReference type="RefSeq" id="WP_005783989.1">
    <property type="nucleotide sequence ID" value="NZ_UFTH01000001.1"/>
</dbReference>
<dbReference type="SMR" id="Q5LIK4"/>
<dbReference type="PaxDb" id="272559-BF9343_0243"/>
<dbReference type="GeneID" id="60367685"/>
<dbReference type="KEGG" id="bfs:BF9343_0243"/>
<dbReference type="eggNOG" id="COG0268">
    <property type="taxonomic scope" value="Bacteria"/>
</dbReference>
<dbReference type="HOGENOM" id="CLU_160655_3_2_10"/>
<dbReference type="Proteomes" id="UP000006731">
    <property type="component" value="Chromosome"/>
</dbReference>
<dbReference type="GO" id="GO:0005829">
    <property type="term" value="C:cytosol"/>
    <property type="evidence" value="ECO:0007669"/>
    <property type="project" value="TreeGrafter"/>
</dbReference>
<dbReference type="GO" id="GO:0015935">
    <property type="term" value="C:small ribosomal subunit"/>
    <property type="evidence" value="ECO:0007669"/>
    <property type="project" value="TreeGrafter"/>
</dbReference>
<dbReference type="GO" id="GO:0070181">
    <property type="term" value="F:small ribosomal subunit rRNA binding"/>
    <property type="evidence" value="ECO:0007669"/>
    <property type="project" value="TreeGrafter"/>
</dbReference>
<dbReference type="GO" id="GO:0003735">
    <property type="term" value="F:structural constituent of ribosome"/>
    <property type="evidence" value="ECO:0007669"/>
    <property type="project" value="InterPro"/>
</dbReference>
<dbReference type="GO" id="GO:0006412">
    <property type="term" value="P:translation"/>
    <property type="evidence" value="ECO:0007669"/>
    <property type="project" value="UniProtKB-UniRule"/>
</dbReference>
<dbReference type="FunFam" id="1.20.58.110:FF:000002">
    <property type="entry name" value="30S ribosomal protein S20"/>
    <property type="match status" value="1"/>
</dbReference>
<dbReference type="Gene3D" id="1.20.58.110">
    <property type="entry name" value="Ribosomal protein S20"/>
    <property type="match status" value="1"/>
</dbReference>
<dbReference type="HAMAP" id="MF_00500">
    <property type="entry name" value="Ribosomal_bS20"/>
    <property type="match status" value="1"/>
</dbReference>
<dbReference type="InterPro" id="IPR002583">
    <property type="entry name" value="Ribosomal_bS20"/>
</dbReference>
<dbReference type="InterPro" id="IPR036510">
    <property type="entry name" value="Ribosomal_bS20_sf"/>
</dbReference>
<dbReference type="NCBIfam" id="TIGR00029">
    <property type="entry name" value="S20"/>
    <property type="match status" value="1"/>
</dbReference>
<dbReference type="PANTHER" id="PTHR33398">
    <property type="entry name" value="30S RIBOSOMAL PROTEIN S20"/>
    <property type="match status" value="1"/>
</dbReference>
<dbReference type="PANTHER" id="PTHR33398:SF1">
    <property type="entry name" value="SMALL RIBOSOMAL SUBUNIT PROTEIN BS20C"/>
    <property type="match status" value="1"/>
</dbReference>
<dbReference type="Pfam" id="PF01649">
    <property type="entry name" value="Ribosomal_S20p"/>
    <property type="match status" value="1"/>
</dbReference>
<dbReference type="SUPFAM" id="SSF46992">
    <property type="entry name" value="Ribosomal protein S20"/>
    <property type="match status" value="1"/>
</dbReference>
<sequence>MANHKSSIKRIRQEETRRLRNRYYGKTMRNAVRKLRSTTDKAEATAMYPGIVKMVDKLAKTNVIHKNKANNLKSKLAIYINKLA</sequence>
<keyword id="KW-0687">Ribonucleoprotein</keyword>
<keyword id="KW-0689">Ribosomal protein</keyword>
<keyword id="KW-0694">RNA-binding</keyword>
<keyword id="KW-0699">rRNA-binding</keyword>
<comment type="function">
    <text evidence="1">Binds directly to 16S ribosomal RNA.</text>
</comment>
<comment type="similarity">
    <text evidence="1">Belongs to the bacterial ribosomal protein bS20 family.</text>
</comment>
<feature type="chain" id="PRO_0000224957" description="Small ribosomal subunit protein bS20">
    <location>
        <begin position="1"/>
        <end position="84"/>
    </location>
</feature>